<organism>
    <name type="scientific">Listeria monocytogenes serotype 4b (strain F2365)</name>
    <dbReference type="NCBI Taxonomy" id="265669"/>
    <lineage>
        <taxon>Bacteria</taxon>
        <taxon>Bacillati</taxon>
        <taxon>Bacillota</taxon>
        <taxon>Bacilli</taxon>
        <taxon>Bacillales</taxon>
        <taxon>Listeriaceae</taxon>
        <taxon>Listeria</taxon>
    </lineage>
</organism>
<evidence type="ECO:0000250" key="1"/>
<evidence type="ECO:0000255" key="2">
    <source>
        <dbReference type="PROSITE-ProRule" id="PRU01251"/>
    </source>
</evidence>
<evidence type="ECO:0000305" key="3"/>
<feature type="chain" id="PRO_0000191136" description="Chaperone protein ClpB">
    <location>
        <begin position="1"/>
        <end position="866"/>
    </location>
</feature>
<feature type="domain" description="Clp R" evidence="2">
    <location>
        <begin position="3"/>
        <end position="148"/>
    </location>
</feature>
<feature type="region of interest" description="Repeat 1" evidence="2">
    <location>
        <begin position="6"/>
        <end position="70"/>
    </location>
</feature>
<feature type="region of interest" description="Repeat 2" evidence="2">
    <location>
        <begin position="84"/>
        <end position="148"/>
    </location>
</feature>
<feature type="region of interest" description="NBD1" evidence="1">
    <location>
        <begin position="161"/>
        <end position="342"/>
    </location>
</feature>
<feature type="region of interest" description="Linker" evidence="1">
    <location>
        <begin position="343"/>
        <end position="551"/>
    </location>
</feature>
<feature type="region of interest" description="NBD2" evidence="1">
    <location>
        <begin position="561"/>
        <end position="772"/>
    </location>
</feature>
<feature type="region of interest" description="C-terminal" evidence="1">
    <location>
        <begin position="773"/>
        <end position="866"/>
    </location>
</feature>
<feature type="coiled-coil region" evidence="1">
    <location>
        <begin position="393"/>
        <end position="527"/>
    </location>
</feature>
<feature type="binding site" evidence="1">
    <location>
        <begin position="208"/>
        <end position="215"/>
    </location>
    <ligand>
        <name>ATP</name>
        <dbReference type="ChEBI" id="CHEBI:30616"/>
        <label>1</label>
    </ligand>
</feature>
<feature type="binding site" evidence="1">
    <location>
        <begin position="611"/>
        <end position="618"/>
    </location>
    <ligand>
        <name>ATP</name>
        <dbReference type="ChEBI" id="CHEBI:30616"/>
        <label>2</label>
    </ligand>
</feature>
<protein>
    <recommendedName>
        <fullName>Chaperone protein ClpB</fullName>
    </recommendedName>
</protein>
<dbReference type="EMBL" id="AE017262">
    <property type="protein sequence ID" value="AAT05006.1"/>
    <property type="molecule type" value="Genomic_DNA"/>
</dbReference>
<dbReference type="RefSeq" id="WP_003726239.1">
    <property type="nucleotide sequence ID" value="NC_002973.6"/>
</dbReference>
<dbReference type="SMR" id="Q71XF9"/>
<dbReference type="KEGG" id="lmf:LMOf2365_2239"/>
<dbReference type="HOGENOM" id="CLU_005070_4_0_9"/>
<dbReference type="GO" id="GO:0005737">
    <property type="term" value="C:cytoplasm"/>
    <property type="evidence" value="ECO:0007669"/>
    <property type="project" value="UniProtKB-SubCell"/>
</dbReference>
<dbReference type="GO" id="GO:0005524">
    <property type="term" value="F:ATP binding"/>
    <property type="evidence" value="ECO:0007669"/>
    <property type="project" value="UniProtKB-KW"/>
</dbReference>
<dbReference type="GO" id="GO:0016887">
    <property type="term" value="F:ATP hydrolysis activity"/>
    <property type="evidence" value="ECO:0007669"/>
    <property type="project" value="InterPro"/>
</dbReference>
<dbReference type="GO" id="GO:0034605">
    <property type="term" value="P:cellular response to heat"/>
    <property type="evidence" value="ECO:0007669"/>
    <property type="project" value="TreeGrafter"/>
</dbReference>
<dbReference type="GO" id="GO:0042026">
    <property type="term" value="P:protein refolding"/>
    <property type="evidence" value="ECO:0007669"/>
    <property type="project" value="InterPro"/>
</dbReference>
<dbReference type="CDD" id="cd00009">
    <property type="entry name" value="AAA"/>
    <property type="match status" value="1"/>
</dbReference>
<dbReference type="CDD" id="cd19499">
    <property type="entry name" value="RecA-like_ClpB_Hsp104-like"/>
    <property type="match status" value="1"/>
</dbReference>
<dbReference type="FunFam" id="1.10.1780.10:FF:000015">
    <property type="entry name" value="ATP-dependent chaperone ClpB"/>
    <property type="match status" value="1"/>
</dbReference>
<dbReference type="FunFam" id="1.10.8.60:FF:000017">
    <property type="entry name" value="ATP-dependent chaperone ClpB"/>
    <property type="match status" value="1"/>
</dbReference>
<dbReference type="FunFam" id="3.40.50.300:FF:000120">
    <property type="entry name" value="ATP-dependent chaperone ClpB"/>
    <property type="match status" value="1"/>
</dbReference>
<dbReference type="FunFam" id="3.40.50.300:FF:000025">
    <property type="entry name" value="ATP-dependent Clp protease subunit"/>
    <property type="match status" value="1"/>
</dbReference>
<dbReference type="FunFam" id="3.40.50.300:FF:000010">
    <property type="entry name" value="Chaperone clpB 1, putative"/>
    <property type="match status" value="1"/>
</dbReference>
<dbReference type="Gene3D" id="1.10.8.60">
    <property type="match status" value="1"/>
</dbReference>
<dbReference type="Gene3D" id="1.10.1780.10">
    <property type="entry name" value="Clp, N-terminal domain"/>
    <property type="match status" value="1"/>
</dbReference>
<dbReference type="Gene3D" id="3.40.50.300">
    <property type="entry name" value="P-loop containing nucleotide triphosphate hydrolases"/>
    <property type="match status" value="3"/>
</dbReference>
<dbReference type="InterPro" id="IPR003593">
    <property type="entry name" value="AAA+_ATPase"/>
</dbReference>
<dbReference type="InterPro" id="IPR003959">
    <property type="entry name" value="ATPase_AAA_core"/>
</dbReference>
<dbReference type="InterPro" id="IPR017730">
    <property type="entry name" value="Chaperonin_ClpB"/>
</dbReference>
<dbReference type="InterPro" id="IPR019489">
    <property type="entry name" value="Clp_ATPase_C"/>
</dbReference>
<dbReference type="InterPro" id="IPR036628">
    <property type="entry name" value="Clp_N_dom_sf"/>
</dbReference>
<dbReference type="InterPro" id="IPR004176">
    <property type="entry name" value="Clp_R_dom"/>
</dbReference>
<dbReference type="InterPro" id="IPR001270">
    <property type="entry name" value="ClpA/B"/>
</dbReference>
<dbReference type="InterPro" id="IPR018368">
    <property type="entry name" value="ClpA/B_CS1"/>
</dbReference>
<dbReference type="InterPro" id="IPR028299">
    <property type="entry name" value="ClpA/B_CS2"/>
</dbReference>
<dbReference type="InterPro" id="IPR041546">
    <property type="entry name" value="ClpA/ClpB_AAA_lid"/>
</dbReference>
<dbReference type="InterPro" id="IPR050130">
    <property type="entry name" value="ClpA_ClpB"/>
</dbReference>
<dbReference type="InterPro" id="IPR027417">
    <property type="entry name" value="P-loop_NTPase"/>
</dbReference>
<dbReference type="NCBIfam" id="TIGR03346">
    <property type="entry name" value="chaperone_ClpB"/>
    <property type="match status" value="1"/>
</dbReference>
<dbReference type="PANTHER" id="PTHR11638">
    <property type="entry name" value="ATP-DEPENDENT CLP PROTEASE"/>
    <property type="match status" value="1"/>
</dbReference>
<dbReference type="PANTHER" id="PTHR11638:SF18">
    <property type="entry name" value="HEAT SHOCK PROTEIN 104"/>
    <property type="match status" value="1"/>
</dbReference>
<dbReference type="Pfam" id="PF00004">
    <property type="entry name" value="AAA"/>
    <property type="match status" value="1"/>
</dbReference>
<dbReference type="Pfam" id="PF07724">
    <property type="entry name" value="AAA_2"/>
    <property type="match status" value="1"/>
</dbReference>
<dbReference type="Pfam" id="PF17871">
    <property type="entry name" value="AAA_lid_9"/>
    <property type="match status" value="1"/>
</dbReference>
<dbReference type="Pfam" id="PF02861">
    <property type="entry name" value="Clp_N"/>
    <property type="match status" value="2"/>
</dbReference>
<dbReference type="Pfam" id="PF10431">
    <property type="entry name" value="ClpB_D2-small"/>
    <property type="match status" value="1"/>
</dbReference>
<dbReference type="PRINTS" id="PR00300">
    <property type="entry name" value="CLPPROTEASEA"/>
</dbReference>
<dbReference type="SMART" id="SM00382">
    <property type="entry name" value="AAA"/>
    <property type="match status" value="2"/>
</dbReference>
<dbReference type="SMART" id="SM01086">
    <property type="entry name" value="ClpB_D2-small"/>
    <property type="match status" value="1"/>
</dbReference>
<dbReference type="SUPFAM" id="SSF81923">
    <property type="entry name" value="Double Clp-N motif"/>
    <property type="match status" value="1"/>
</dbReference>
<dbReference type="SUPFAM" id="SSF52540">
    <property type="entry name" value="P-loop containing nucleoside triphosphate hydrolases"/>
    <property type="match status" value="2"/>
</dbReference>
<dbReference type="PROSITE" id="PS51903">
    <property type="entry name" value="CLP_R"/>
    <property type="match status" value="1"/>
</dbReference>
<dbReference type="PROSITE" id="PS00870">
    <property type="entry name" value="CLPAB_1"/>
    <property type="match status" value="1"/>
</dbReference>
<dbReference type="PROSITE" id="PS00871">
    <property type="entry name" value="CLPAB_2"/>
    <property type="match status" value="1"/>
</dbReference>
<name>CLPB_LISMF</name>
<sequence length="866" mass="97526">MDLQKFTQQVQQTIADAQNLAIASEHQEIDVAHVFKVLLTESDFAKRVYDVAEVDIDALQKTVEDALTKIPVVSGSGVNYGQAMSQALFQLMRDAEKEQKQLDDDFVSTEHLILAVMDQKSNPITMNLKKQHKSKKQIQEAILKIRGGKKVTSQNAEENYEALTKYGRDLVAEVRSGKLDPVIGRDAEIRNVIRILSRKTKNNPVLIGEPGVGKTAIVEGLAQRIVRKDVPEGLKDKTIISLDIGSLIAGAKYRGEFEERLKAVLQEVKQSDGQILLFIDEIHTIVGAGKTDGAMDAGNMLKPMLARGELHCIGATTLDEYRQYIEKDAALERRFQKVLVPEPTVEDTVSILRGLKERFEIHHGVNIHDNALVAAASLSNRYITDRFLPDKAIDLVDEACATIRVEIDSMPSELDEVTRKVMQLEIEEAALKEEKDPASERRLEILQRELADYKEEANQMKSKWESEKNEISKIREVREQIDHLRHELEEAENNYDLNKAAELRHGKIPAVEKELLELEAENREKTAQEDRILQEEVTENEIAEIVGRWTGIPVTKLVEGEREKLLKLADELHQKVIGQDDAVQLVSDAVLRARAGIKDPKRPIGSFIFLGPTGVGKTELAKALAFNMFDSEDHMIRIDMSEYMEKHSVSRLVGAPPGYVGYEEGGQLTEAVRRNPYSIVLLDEIEKAHPDVFNILLQVLDDGRITDSQGRLIDFKNTVIIMTSNIGSNLLLERTEEGEISPELESDVMQILQSEFKPEFLNRVDDIILFKPLTLADIKGIVEKLVEELQIRLADQEITITISDNAKAFIAEEAYDPVYGARPLKRYIVRHVETPLAREIVSGKIMPHSSVEIDLADKEFTFKVTE</sequence>
<keyword id="KW-0067">ATP-binding</keyword>
<keyword id="KW-0143">Chaperone</keyword>
<keyword id="KW-0175">Coiled coil</keyword>
<keyword id="KW-0963">Cytoplasm</keyword>
<keyword id="KW-0547">Nucleotide-binding</keyword>
<keyword id="KW-0677">Repeat</keyword>
<keyword id="KW-0346">Stress response</keyword>
<comment type="function">
    <text evidence="1">Part of a stress-induced multi-chaperone system, it is involved in the recovery of the cell from heat-induced damage, in cooperation with DnaK, DnaJ and GrpE. Acts before DnaK, in the processing of protein aggregates. Protein binding stimulates the ATPase activity; ATP hydrolysis unfolds the denatured protein aggregates, which probably helps expose new hydrophobic binding sites on the surface of ClpB-bound aggregates, contributing to the solubilization and refolding of denatured protein aggregates by DnaK (By similarity).</text>
</comment>
<comment type="subunit">
    <text evidence="1">Homohexamer. The oligomerization is ATP-dependent (By similarity).</text>
</comment>
<comment type="subcellular location">
    <subcellularLocation>
        <location evidence="3">Cytoplasm</location>
    </subcellularLocation>
</comment>
<comment type="domain">
    <text evidence="1">The Clp repeat (R) domain probably functions as a substrate-discriminating domain, recruiting aggregated proteins to the ClpB hexamer and/or stabilizing bound proteins. The NBD2 domain is responsible for oligomerization, whereas the NBD1 domain stabilizes the hexamer probably in an ATP-dependent manner. The movement of the coiled-coil domain is essential for ClpB ability to rescue proteins from an aggregated state, probably by pulling apart large aggregated proteins, which are bound between the coiled-coils motifs of adjacent ClpB subunits in the functional hexamer (By similarity).</text>
</comment>
<comment type="similarity">
    <text evidence="3">Belongs to the ClpA/ClpB family.</text>
</comment>
<reference key="1">
    <citation type="journal article" date="2004" name="Nucleic Acids Res.">
        <title>Whole genome comparisons of serotype 4b and 1/2a strains of the food-borne pathogen Listeria monocytogenes reveal new insights into the core genome components of this species.</title>
        <authorList>
            <person name="Nelson K.E."/>
            <person name="Fouts D.E."/>
            <person name="Mongodin E.F."/>
            <person name="Ravel J."/>
            <person name="DeBoy R.T."/>
            <person name="Kolonay J.F."/>
            <person name="Rasko D.A."/>
            <person name="Angiuoli S.V."/>
            <person name="Gill S.R."/>
            <person name="Paulsen I.T."/>
            <person name="Peterson J.D."/>
            <person name="White O."/>
            <person name="Nelson W.C."/>
            <person name="Nierman W.C."/>
            <person name="Beanan M.J."/>
            <person name="Brinkac L.M."/>
            <person name="Daugherty S.C."/>
            <person name="Dodson R.J."/>
            <person name="Durkin A.S."/>
            <person name="Madupu R."/>
            <person name="Haft D.H."/>
            <person name="Selengut J."/>
            <person name="Van Aken S.E."/>
            <person name="Khouri H.M."/>
            <person name="Fedorova N."/>
            <person name="Forberger H.A."/>
            <person name="Tran B."/>
            <person name="Kathariou S."/>
            <person name="Wonderling L.D."/>
            <person name="Uhlich G.A."/>
            <person name="Bayles D.O."/>
            <person name="Luchansky J.B."/>
            <person name="Fraser C.M."/>
        </authorList>
    </citation>
    <scope>NUCLEOTIDE SEQUENCE [LARGE SCALE GENOMIC DNA]</scope>
    <source>
        <strain>F2365</strain>
    </source>
</reference>
<gene>
    <name type="primary">clpB</name>
    <name type="ordered locus">LMOf2365_2239</name>
</gene>
<accession>Q71XF9</accession>
<proteinExistence type="inferred from homology"/>